<gene>
    <name type="primary">iscU</name>
    <name type="synonym">nifU</name>
    <name type="ordered locus">c3055</name>
</gene>
<proteinExistence type="inferred from homology"/>
<name>ISCU_ECOL6</name>
<comment type="function">
    <text evidence="1">A scaffold on which IscS assembles Fe-S clusters. Subsequently gives the nascent cluster to other proteins. It is likely that Fe-S cluster coordination is flexible as the role of this complex is to build and then hand off Fe-S clusters (By similarity).</text>
</comment>
<comment type="subunit">
    <text evidence="1">Forms a heterotetramer with IscS; each subunit of the IscS dimer contacts an IscU monomer.</text>
</comment>
<comment type="similarity">
    <text evidence="2">Belongs to the NifU family.</text>
</comment>
<protein>
    <recommendedName>
        <fullName>Iron-sulfur cluster assembly scaffold protein IscU</fullName>
    </recommendedName>
    <alternativeName>
        <fullName>Sulfur acceptor protein IscU</fullName>
    </alternativeName>
</protein>
<reference key="1">
    <citation type="journal article" date="2002" name="Proc. Natl. Acad. Sci. U.S.A.">
        <title>Extensive mosaic structure revealed by the complete genome sequence of uropathogenic Escherichia coli.</title>
        <authorList>
            <person name="Welch R.A."/>
            <person name="Burland V."/>
            <person name="Plunkett G. III"/>
            <person name="Redford P."/>
            <person name="Roesch P."/>
            <person name="Rasko D."/>
            <person name="Buckles E.L."/>
            <person name="Liou S.-R."/>
            <person name="Boutin A."/>
            <person name="Hackett J."/>
            <person name="Stroud D."/>
            <person name="Mayhew G.F."/>
            <person name="Rose D.J."/>
            <person name="Zhou S."/>
            <person name="Schwartz D.C."/>
            <person name="Perna N.T."/>
            <person name="Mobley H.L.T."/>
            <person name="Donnenberg M.S."/>
            <person name="Blattner F.R."/>
        </authorList>
    </citation>
    <scope>NUCLEOTIDE SEQUENCE [LARGE SCALE GENOMIC DNA]</scope>
    <source>
        <strain>CFT073 / ATCC 700928 / UPEC</strain>
    </source>
</reference>
<sequence length="128" mass="13849">MAYSEKVIDHYENPRNVGSFDNNDENVGSGMVGAPACGDVMKLQIKVNDEGIIEDARFKTYGCGSAIASSSLVTEWVKGKSLDEAQAIKNTDIAEELELPPVKIHCSILAEDAIKAAIADYKSKREAK</sequence>
<evidence type="ECO:0000250" key="1"/>
<evidence type="ECO:0000305" key="2"/>
<organism>
    <name type="scientific">Escherichia coli O6:H1 (strain CFT073 / ATCC 700928 / UPEC)</name>
    <dbReference type="NCBI Taxonomy" id="199310"/>
    <lineage>
        <taxon>Bacteria</taxon>
        <taxon>Pseudomonadati</taxon>
        <taxon>Pseudomonadota</taxon>
        <taxon>Gammaproteobacteria</taxon>
        <taxon>Enterobacterales</taxon>
        <taxon>Enterobacteriaceae</taxon>
        <taxon>Escherichia</taxon>
    </lineage>
</organism>
<dbReference type="EMBL" id="AE014075">
    <property type="protein sequence ID" value="AAN81505.1"/>
    <property type="molecule type" value="Genomic_DNA"/>
</dbReference>
<dbReference type="RefSeq" id="WP_000331707.1">
    <property type="nucleotide sequence ID" value="NZ_CP051263.1"/>
</dbReference>
<dbReference type="BMRB" id="P0ACD5"/>
<dbReference type="SMR" id="P0ACD5"/>
<dbReference type="STRING" id="199310.c3055"/>
<dbReference type="GeneID" id="93774607"/>
<dbReference type="KEGG" id="ecc:c3055"/>
<dbReference type="eggNOG" id="COG0822">
    <property type="taxonomic scope" value="Bacteria"/>
</dbReference>
<dbReference type="HOGENOM" id="CLU_079283_5_0_6"/>
<dbReference type="BioCyc" id="ECOL199310:C3055-MONOMER"/>
<dbReference type="Proteomes" id="UP000001410">
    <property type="component" value="Chromosome"/>
</dbReference>
<dbReference type="GO" id="GO:0005737">
    <property type="term" value="C:cytoplasm"/>
    <property type="evidence" value="ECO:0007669"/>
    <property type="project" value="UniProtKB-ARBA"/>
</dbReference>
<dbReference type="GO" id="GO:0005506">
    <property type="term" value="F:iron ion binding"/>
    <property type="evidence" value="ECO:0007669"/>
    <property type="project" value="InterPro"/>
</dbReference>
<dbReference type="GO" id="GO:0051536">
    <property type="term" value="F:iron-sulfur cluster binding"/>
    <property type="evidence" value="ECO:0007669"/>
    <property type="project" value="InterPro"/>
</dbReference>
<dbReference type="GO" id="GO:0016226">
    <property type="term" value="P:iron-sulfur cluster assembly"/>
    <property type="evidence" value="ECO:0007669"/>
    <property type="project" value="InterPro"/>
</dbReference>
<dbReference type="CDD" id="cd06664">
    <property type="entry name" value="IscU_like"/>
    <property type="match status" value="1"/>
</dbReference>
<dbReference type="FunFam" id="3.90.1010.10:FF:000001">
    <property type="entry name" value="Iron-sulfur cluster assembly scaffold protein IscU"/>
    <property type="match status" value="1"/>
</dbReference>
<dbReference type="Gene3D" id="3.90.1010.10">
    <property type="match status" value="1"/>
</dbReference>
<dbReference type="InterPro" id="IPR011339">
    <property type="entry name" value="ISCU"/>
</dbReference>
<dbReference type="InterPro" id="IPR002871">
    <property type="entry name" value="NIF_FeS_clus_asmbl_NifU_N"/>
</dbReference>
<dbReference type="NCBIfam" id="TIGR01999">
    <property type="entry name" value="iscU"/>
    <property type="match status" value="1"/>
</dbReference>
<dbReference type="PANTHER" id="PTHR10093">
    <property type="entry name" value="IRON-SULFUR CLUSTER ASSEMBLY ENZYME NIFU HOMOLOG"/>
    <property type="match status" value="1"/>
</dbReference>
<dbReference type="Pfam" id="PF01592">
    <property type="entry name" value="NifU_N"/>
    <property type="match status" value="1"/>
</dbReference>
<dbReference type="SUPFAM" id="SSF82649">
    <property type="entry name" value="SufE/NifU"/>
    <property type="match status" value="1"/>
</dbReference>
<accession>P0ACD5</accession>
<accession>P77310</accession>
<feature type="chain" id="PRO_0000166186" description="Iron-sulfur cluster assembly scaffold protein IscU">
    <location>
        <begin position="1"/>
        <end position="128"/>
    </location>
</feature>
<keyword id="KW-1185">Reference proteome</keyword>